<comment type="cofactor">
    <cofactor evidence="1">
        <name>Zn(2+)</name>
        <dbReference type="ChEBI" id="CHEBI:29105"/>
    </cofactor>
    <text evidence="1">Binds 3 Zn(2+) ions per subunit.</text>
</comment>
<comment type="subunit">
    <text evidence="1">Homotrimer.</text>
</comment>
<comment type="similarity">
    <text evidence="1">Belongs to the PHP family.</text>
</comment>
<name>YCDX_SALPC</name>
<dbReference type="EC" id="3.1.3.-" evidence="1"/>
<dbReference type="EMBL" id="CP000857">
    <property type="protein sequence ID" value="ACN46716.1"/>
    <property type="molecule type" value="Genomic_DNA"/>
</dbReference>
<dbReference type="RefSeq" id="WP_000283643.1">
    <property type="nucleotide sequence ID" value="NC_012125.1"/>
</dbReference>
<dbReference type="SMR" id="C0Q871"/>
<dbReference type="KEGG" id="sei:SPC_2614"/>
<dbReference type="HOGENOM" id="CLU_061999_0_1_6"/>
<dbReference type="Proteomes" id="UP000001599">
    <property type="component" value="Chromosome"/>
</dbReference>
<dbReference type="GO" id="GO:0005829">
    <property type="term" value="C:cytosol"/>
    <property type="evidence" value="ECO:0007669"/>
    <property type="project" value="TreeGrafter"/>
</dbReference>
<dbReference type="GO" id="GO:0016791">
    <property type="term" value="F:phosphatase activity"/>
    <property type="evidence" value="ECO:0007669"/>
    <property type="project" value="UniProtKB-UniRule"/>
</dbReference>
<dbReference type="GO" id="GO:0008270">
    <property type="term" value="F:zinc ion binding"/>
    <property type="evidence" value="ECO:0007669"/>
    <property type="project" value="UniProtKB-UniRule"/>
</dbReference>
<dbReference type="GO" id="GO:0071978">
    <property type="term" value="P:bacterial-type flagellum-dependent swarming motility"/>
    <property type="evidence" value="ECO:0007669"/>
    <property type="project" value="TreeGrafter"/>
</dbReference>
<dbReference type="CDD" id="cd07437">
    <property type="entry name" value="PHP_HisPPase_Ycdx_like"/>
    <property type="match status" value="1"/>
</dbReference>
<dbReference type="FunFam" id="3.20.20.140:FF:000008">
    <property type="entry name" value="Probable phosphatase YcdX"/>
    <property type="match status" value="1"/>
</dbReference>
<dbReference type="Gene3D" id="3.20.20.140">
    <property type="entry name" value="Metal-dependent hydrolases"/>
    <property type="match status" value="1"/>
</dbReference>
<dbReference type="HAMAP" id="MF_01561">
    <property type="entry name" value="YcdX_phosphat"/>
    <property type="match status" value="1"/>
</dbReference>
<dbReference type="InterPro" id="IPR023710">
    <property type="entry name" value="Phosphatase_YcdX_put"/>
</dbReference>
<dbReference type="InterPro" id="IPR004013">
    <property type="entry name" value="PHP_dom"/>
</dbReference>
<dbReference type="InterPro" id="IPR050243">
    <property type="entry name" value="PHP_phosphatase"/>
</dbReference>
<dbReference type="InterPro" id="IPR003141">
    <property type="entry name" value="Pol/His_phosphatase_N"/>
</dbReference>
<dbReference type="InterPro" id="IPR016195">
    <property type="entry name" value="Pol/histidinol_Pase-like"/>
</dbReference>
<dbReference type="NCBIfam" id="NF006702">
    <property type="entry name" value="PRK09248.1"/>
    <property type="match status" value="1"/>
</dbReference>
<dbReference type="PANTHER" id="PTHR36928">
    <property type="entry name" value="PHOSPHATASE YCDX-RELATED"/>
    <property type="match status" value="1"/>
</dbReference>
<dbReference type="PANTHER" id="PTHR36928:SF1">
    <property type="entry name" value="PHOSPHATASE YCDX-RELATED"/>
    <property type="match status" value="1"/>
</dbReference>
<dbReference type="Pfam" id="PF02811">
    <property type="entry name" value="PHP"/>
    <property type="match status" value="1"/>
</dbReference>
<dbReference type="SMART" id="SM00481">
    <property type="entry name" value="POLIIIAc"/>
    <property type="match status" value="1"/>
</dbReference>
<dbReference type="SUPFAM" id="SSF89550">
    <property type="entry name" value="PHP domain-like"/>
    <property type="match status" value="1"/>
</dbReference>
<sequence length="245" mass="26906">MYPVDLHMHTVASTHAYSTLSDYIAEAKRKGIKLFAITDHGPDMEDAPHHWHFINMRIWPRLVDGVGILRGIEANIKNINGEIDCSGKMFDSLDLIIAGFHEPVFAPHDKETNTQAMIATIASGKVHIISHPGNPKYPVEVKAIAQAAAKHHVALEINNSSFLHSRKGSEDNCRAVAAAVRDAGGWVALGSDSHTAFTLGDFTECRKILDAVNFPEDRILNVSPQRLLAFLESRGMAPVPEFAEL</sequence>
<protein>
    <recommendedName>
        <fullName evidence="1">Probable phosphatase YcdX</fullName>
        <ecNumber evidence="1">3.1.3.-</ecNumber>
    </recommendedName>
</protein>
<gene>
    <name evidence="1" type="primary">ycdX</name>
    <name type="ordered locus">SPC_2614</name>
</gene>
<accession>C0Q871</accession>
<keyword id="KW-0378">Hydrolase</keyword>
<keyword id="KW-0479">Metal-binding</keyword>
<keyword id="KW-0862">Zinc</keyword>
<proteinExistence type="inferred from homology"/>
<feature type="chain" id="PRO_1000185433" description="Probable phosphatase YcdX">
    <location>
        <begin position="1"/>
        <end position="245"/>
    </location>
</feature>
<feature type="binding site" evidence="1">
    <location>
        <position position="7"/>
    </location>
    <ligand>
        <name>Zn(2+)</name>
        <dbReference type="ChEBI" id="CHEBI:29105"/>
        <label>1</label>
    </ligand>
</feature>
<feature type="binding site" evidence="1">
    <location>
        <position position="9"/>
    </location>
    <ligand>
        <name>Zn(2+)</name>
        <dbReference type="ChEBI" id="CHEBI:29105"/>
        <label>1</label>
    </ligand>
</feature>
<feature type="binding site" evidence="1">
    <location>
        <position position="15"/>
    </location>
    <ligand>
        <name>Zn(2+)</name>
        <dbReference type="ChEBI" id="CHEBI:29105"/>
        <label>2</label>
    </ligand>
</feature>
<feature type="binding site" evidence="1">
    <location>
        <position position="40"/>
    </location>
    <ligand>
        <name>Zn(2+)</name>
        <dbReference type="ChEBI" id="CHEBI:29105"/>
        <label>2</label>
    </ligand>
</feature>
<feature type="binding site" evidence="1">
    <location>
        <position position="73"/>
    </location>
    <ligand>
        <name>Zn(2+)</name>
        <dbReference type="ChEBI" id="CHEBI:29105"/>
        <label>1</label>
    </ligand>
</feature>
<feature type="binding site" evidence="1">
    <location>
        <position position="73"/>
    </location>
    <ligand>
        <name>Zn(2+)</name>
        <dbReference type="ChEBI" id="CHEBI:29105"/>
        <label>3</label>
    </ligand>
</feature>
<feature type="binding site" evidence="1">
    <location>
        <position position="101"/>
    </location>
    <ligand>
        <name>Zn(2+)</name>
        <dbReference type="ChEBI" id="CHEBI:29105"/>
        <label>3</label>
    </ligand>
</feature>
<feature type="binding site" evidence="1">
    <location>
        <position position="131"/>
    </location>
    <ligand>
        <name>Zn(2+)</name>
        <dbReference type="ChEBI" id="CHEBI:29105"/>
        <label>3</label>
    </ligand>
</feature>
<feature type="binding site" evidence="1">
    <location>
        <position position="192"/>
    </location>
    <ligand>
        <name>Zn(2+)</name>
        <dbReference type="ChEBI" id="CHEBI:29105"/>
        <label>1</label>
    </ligand>
</feature>
<feature type="binding site" evidence="1">
    <location>
        <position position="194"/>
    </location>
    <ligand>
        <name>Zn(2+)</name>
        <dbReference type="ChEBI" id="CHEBI:29105"/>
        <label>2</label>
    </ligand>
</feature>
<evidence type="ECO:0000255" key="1">
    <source>
        <dbReference type="HAMAP-Rule" id="MF_01561"/>
    </source>
</evidence>
<organism>
    <name type="scientific">Salmonella paratyphi C (strain RKS4594)</name>
    <dbReference type="NCBI Taxonomy" id="476213"/>
    <lineage>
        <taxon>Bacteria</taxon>
        <taxon>Pseudomonadati</taxon>
        <taxon>Pseudomonadota</taxon>
        <taxon>Gammaproteobacteria</taxon>
        <taxon>Enterobacterales</taxon>
        <taxon>Enterobacteriaceae</taxon>
        <taxon>Salmonella</taxon>
    </lineage>
</organism>
<reference key="1">
    <citation type="journal article" date="2009" name="PLoS ONE">
        <title>Salmonella paratyphi C: genetic divergence from Salmonella choleraesuis and pathogenic convergence with Salmonella typhi.</title>
        <authorList>
            <person name="Liu W.-Q."/>
            <person name="Feng Y."/>
            <person name="Wang Y."/>
            <person name="Zou Q.-H."/>
            <person name="Chen F."/>
            <person name="Guo J.-T."/>
            <person name="Peng Y.-H."/>
            <person name="Jin Y."/>
            <person name="Li Y.-G."/>
            <person name="Hu S.-N."/>
            <person name="Johnston R.N."/>
            <person name="Liu G.-R."/>
            <person name="Liu S.-L."/>
        </authorList>
    </citation>
    <scope>NUCLEOTIDE SEQUENCE [LARGE SCALE GENOMIC DNA]</scope>
    <source>
        <strain>RKS4594</strain>
    </source>
</reference>